<accession>A9BD80</accession>
<feature type="chain" id="PRO_1000098677" description="tRNA dimethylallyltransferase">
    <location>
        <begin position="1"/>
        <end position="299"/>
    </location>
</feature>
<feature type="region of interest" description="Interaction with substrate tRNA" evidence="1">
    <location>
        <begin position="38"/>
        <end position="41"/>
    </location>
</feature>
<feature type="binding site" evidence="1">
    <location>
        <begin position="13"/>
        <end position="20"/>
    </location>
    <ligand>
        <name>ATP</name>
        <dbReference type="ChEBI" id="CHEBI:30616"/>
    </ligand>
</feature>
<feature type="binding site" evidence="1">
    <location>
        <begin position="15"/>
        <end position="20"/>
    </location>
    <ligand>
        <name>substrate</name>
    </ligand>
</feature>
<feature type="site" description="Interaction with substrate tRNA" evidence="1">
    <location>
        <position position="104"/>
    </location>
</feature>
<comment type="function">
    <text evidence="1">Catalyzes the transfer of a dimethylallyl group onto the adenine at position 37 in tRNAs that read codons beginning with uridine, leading to the formation of N6-(dimethylallyl)adenosine (i(6)A).</text>
</comment>
<comment type="catalytic activity">
    <reaction evidence="1">
        <text>adenosine(37) in tRNA + dimethylallyl diphosphate = N(6)-dimethylallyladenosine(37) in tRNA + diphosphate</text>
        <dbReference type="Rhea" id="RHEA:26482"/>
        <dbReference type="Rhea" id="RHEA-COMP:10162"/>
        <dbReference type="Rhea" id="RHEA-COMP:10375"/>
        <dbReference type="ChEBI" id="CHEBI:33019"/>
        <dbReference type="ChEBI" id="CHEBI:57623"/>
        <dbReference type="ChEBI" id="CHEBI:74411"/>
        <dbReference type="ChEBI" id="CHEBI:74415"/>
        <dbReference type="EC" id="2.5.1.75"/>
    </reaction>
</comment>
<comment type="cofactor">
    <cofactor evidence="1">
        <name>Mg(2+)</name>
        <dbReference type="ChEBI" id="CHEBI:18420"/>
    </cofactor>
</comment>
<comment type="subunit">
    <text evidence="1">Monomer.</text>
</comment>
<comment type="similarity">
    <text evidence="1">Belongs to the IPP transferase family.</text>
</comment>
<name>MIAA_PROM4</name>
<sequence>MSSSKPLIIVLLGPTASGKTALGIEIAEHLGLEIHNVDSRQVYMDMDIGTAKPSQEQQKRIRHFLIDLKPPNEKMTMHDFHKTARVSLDNALNKTNVGLLVGGSGLYLKALTSGLCPPSIPPESSFRKQLHDIGQEQCYQLLQSCDPLSAKTIAPSDSVRTTRALEVFYATGQSKTSLQSSKPPPWRLLELGLNPSNLNDRIAQRTENIFQNGLIEETEHLIGKFGKELPLLNTIGYAEASQMIDGKLPLNDAIFQTNKRTKQFAKRQKTWFRGQHNPKWLNEKNPLSEALSLIHNVIR</sequence>
<protein>
    <recommendedName>
        <fullName evidence="1">tRNA dimethylallyltransferase</fullName>
        <ecNumber evidence="1">2.5.1.75</ecNumber>
    </recommendedName>
    <alternativeName>
        <fullName evidence="1">Dimethylallyl diphosphate:tRNA dimethylallyltransferase</fullName>
        <shortName evidence="1">DMAPP:tRNA dimethylallyltransferase</shortName>
        <shortName evidence="1">DMATase</shortName>
    </alternativeName>
    <alternativeName>
        <fullName evidence="1">Isopentenyl-diphosphate:tRNA isopentenyltransferase</fullName>
        <shortName evidence="1">IPP transferase</shortName>
        <shortName evidence="1">IPPT</shortName>
        <shortName evidence="1">IPTase</shortName>
    </alternativeName>
</protein>
<keyword id="KW-0067">ATP-binding</keyword>
<keyword id="KW-0460">Magnesium</keyword>
<keyword id="KW-0547">Nucleotide-binding</keyword>
<keyword id="KW-1185">Reference proteome</keyword>
<keyword id="KW-0808">Transferase</keyword>
<keyword id="KW-0819">tRNA processing</keyword>
<proteinExistence type="inferred from homology"/>
<evidence type="ECO:0000255" key="1">
    <source>
        <dbReference type="HAMAP-Rule" id="MF_00185"/>
    </source>
</evidence>
<reference key="1">
    <citation type="journal article" date="2007" name="PLoS Genet.">
        <title>Patterns and implications of gene gain and loss in the evolution of Prochlorococcus.</title>
        <authorList>
            <person name="Kettler G.C."/>
            <person name="Martiny A.C."/>
            <person name="Huang K."/>
            <person name="Zucker J."/>
            <person name="Coleman M.L."/>
            <person name="Rodrigue S."/>
            <person name="Chen F."/>
            <person name="Lapidus A."/>
            <person name="Ferriera S."/>
            <person name="Johnson J."/>
            <person name="Steglich C."/>
            <person name="Church G.M."/>
            <person name="Richardson P."/>
            <person name="Chisholm S.W."/>
        </authorList>
    </citation>
    <scope>NUCLEOTIDE SEQUENCE [LARGE SCALE GENOMIC DNA]</scope>
    <source>
        <strain>MIT 9211</strain>
    </source>
</reference>
<gene>
    <name evidence="1" type="primary">miaA</name>
    <name type="ordered locus">P9211_17621</name>
</gene>
<organism>
    <name type="scientific">Prochlorococcus marinus (strain MIT 9211)</name>
    <dbReference type="NCBI Taxonomy" id="93059"/>
    <lineage>
        <taxon>Bacteria</taxon>
        <taxon>Bacillati</taxon>
        <taxon>Cyanobacteriota</taxon>
        <taxon>Cyanophyceae</taxon>
        <taxon>Synechococcales</taxon>
        <taxon>Prochlorococcaceae</taxon>
        <taxon>Prochlorococcus</taxon>
    </lineage>
</organism>
<dbReference type="EC" id="2.5.1.75" evidence="1"/>
<dbReference type="EMBL" id="CP000878">
    <property type="protein sequence ID" value="ABX09693.1"/>
    <property type="molecule type" value="Genomic_DNA"/>
</dbReference>
<dbReference type="RefSeq" id="WP_012196313.1">
    <property type="nucleotide sequence ID" value="NC_009976.1"/>
</dbReference>
<dbReference type="SMR" id="A9BD80"/>
<dbReference type="STRING" id="93059.P9211_17621"/>
<dbReference type="KEGG" id="pmj:P9211_17621"/>
<dbReference type="eggNOG" id="COG0324">
    <property type="taxonomic scope" value="Bacteria"/>
</dbReference>
<dbReference type="HOGENOM" id="CLU_032616_0_1_3"/>
<dbReference type="OrthoDB" id="9776390at2"/>
<dbReference type="Proteomes" id="UP000000788">
    <property type="component" value="Chromosome"/>
</dbReference>
<dbReference type="GO" id="GO:0005524">
    <property type="term" value="F:ATP binding"/>
    <property type="evidence" value="ECO:0007669"/>
    <property type="project" value="UniProtKB-UniRule"/>
</dbReference>
<dbReference type="GO" id="GO:0052381">
    <property type="term" value="F:tRNA dimethylallyltransferase activity"/>
    <property type="evidence" value="ECO:0007669"/>
    <property type="project" value="UniProtKB-UniRule"/>
</dbReference>
<dbReference type="GO" id="GO:0006400">
    <property type="term" value="P:tRNA modification"/>
    <property type="evidence" value="ECO:0007669"/>
    <property type="project" value="TreeGrafter"/>
</dbReference>
<dbReference type="Gene3D" id="1.10.20.140">
    <property type="match status" value="1"/>
</dbReference>
<dbReference type="Gene3D" id="3.40.50.300">
    <property type="entry name" value="P-loop containing nucleotide triphosphate hydrolases"/>
    <property type="match status" value="1"/>
</dbReference>
<dbReference type="HAMAP" id="MF_00185">
    <property type="entry name" value="IPP_trans"/>
    <property type="match status" value="1"/>
</dbReference>
<dbReference type="InterPro" id="IPR039657">
    <property type="entry name" value="Dimethylallyltransferase"/>
</dbReference>
<dbReference type="InterPro" id="IPR018022">
    <property type="entry name" value="IPT"/>
</dbReference>
<dbReference type="InterPro" id="IPR027417">
    <property type="entry name" value="P-loop_NTPase"/>
</dbReference>
<dbReference type="NCBIfam" id="TIGR00174">
    <property type="entry name" value="miaA"/>
    <property type="match status" value="1"/>
</dbReference>
<dbReference type="PANTHER" id="PTHR11088">
    <property type="entry name" value="TRNA DIMETHYLALLYLTRANSFERASE"/>
    <property type="match status" value="1"/>
</dbReference>
<dbReference type="PANTHER" id="PTHR11088:SF60">
    <property type="entry name" value="TRNA DIMETHYLALLYLTRANSFERASE"/>
    <property type="match status" value="1"/>
</dbReference>
<dbReference type="Pfam" id="PF01715">
    <property type="entry name" value="IPPT"/>
    <property type="match status" value="1"/>
</dbReference>
<dbReference type="SUPFAM" id="SSF52540">
    <property type="entry name" value="P-loop containing nucleoside triphosphate hydrolases"/>
    <property type="match status" value="1"/>
</dbReference>